<dbReference type="EC" id="3.1.26.5" evidence="1"/>
<dbReference type="EMBL" id="CP000436">
    <property type="protein sequence ID" value="ABI24413.1"/>
    <property type="molecule type" value="Genomic_DNA"/>
</dbReference>
<dbReference type="SMR" id="Q0I0Y9"/>
<dbReference type="KEGG" id="hso:HS_0135"/>
<dbReference type="eggNOG" id="COG0594">
    <property type="taxonomic scope" value="Bacteria"/>
</dbReference>
<dbReference type="HOGENOM" id="CLU_117179_11_0_6"/>
<dbReference type="GO" id="GO:0030677">
    <property type="term" value="C:ribonuclease P complex"/>
    <property type="evidence" value="ECO:0007669"/>
    <property type="project" value="TreeGrafter"/>
</dbReference>
<dbReference type="GO" id="GO:0042781">
    <property type="term" value="F:3'-tRNA processing endoribonuclease activity"/>
    <property type="evidence" value="ECO:0007669"/>
    <property type="project" value="TreeGrafter"/>
</dbReference>
<dbReference type="GO" id="GO:0004526">
    <property type="term" value="F:ribonuclease P activity"/>
    <property type="evidence" value="ECO:0007669"/>
    <property type="project" value="UniProtKB-UniRule"/>
</dbReference>
<dbReference type="GO" id="GO:0000049">
    <property type="term" value="F:tRNA binding"/>
    <property type="evidence" value="ECO:0007669"/>
    <property type="project" value="UniProtKB-UniRule"/>
</dbReference>
<dbReference type="GO" id="GO:0001682">
    <property type="term" value="P:tRNA 5'-leader removal"/>
    <property type="evidence" value="ECO:0007669"/>
    <property type="project" value="UniProtKB-UniRule"/>
</dbReference>
<dbReference type="Gene3D" id="3.30.230.10">
    <property type="match status" value="1"/>
</dbReference>
<dbReference type="HAMAP" id="MF_00227">
    <property type="entry name" value="RNase_P"/>
    <property type="match status" value="1"/>
</dbReference>
<dbReference type="InterPro" id="IPR020568">
    <property type="entry name" value="Ribosomal_Su5_D2-typ_SF"/>
</dbReference>
<dbReference type="InterPro" id="IPR014721">
    <property type="entry name" value="Ribsml_uS5_D2-typ_fold_subgr"/>
</dbReference>
<dbReference type="InterPro" id="IPR000100">
    <property type="entry name" value="RNase_P"/>
</dbReference>
<dbReference type="NCBIfam" id="TIGR00188">
    <property type="entry name" value="rnpA"/>
    <property type="match status" value="1"/>
</dbReference>
<dbReference type="PANTHER" id="PTHR33992">
    <property type="entry name" value="RIBONUCLEASE P PROTEIN COMPONENT"/>
    <property type="match status" value="1"/>
</dbReference>
<dbReference type="PANTHER" id="PTHR33992:SF1">
    <property type="entry name" value="RIBONUCLEASE P PROTEIN COMPONENT"/>
    <property type="match status" value="1"/>
</dbReference>
<dbReference type="Pfam" id="PF00825">
    <property type="entry name" value="Ribonuclease_P"/>
    <property type="match status" value="1"/>
</dbReference>
<dbReference type="SUPFAM" id="SSF54211">
    <property type="entry name" value="Ribosomal protein S5 domain 2-like"/>
    <property type="match status" value="1"/>
</dbReference>
<gene>
    <name evidence="1" type="primary">rnpA</name>
    <name type="ordered locus">HS_0135</name>
</gene>
<accession>Q0I0Y9</accession>
<reference key="1">
    <citation type="journal article" date="2007" name="J. Bacteriol.">
        <title>Complete genome sequence of Haemophilus somnus (Histophilus somni) strain 129Pt and comparison to Haemophilus ducreyi 35000HP and Haemophilus influenzae Rd.</title>
        <authorList>
            <person name="Challacombe J.F."/>
            <person name="Duncan A.J."/>
            <person name="Brettin T.S."/>
            <person name="Bruce D."/>
            <person name="Chertkov O."/>
            <person name="Detter J.C."/>
            <person name="Han C.S."/>
            <person name="Misra M."/>
            <person name="Richardson P."/>
            <person name="Tapia R."/>
            <person name="Thayer N."/>
            <person name="Xie G."/>
            <person name="Inzana T.J."/>
        </authorList>
    </citation>
    <scope>NUCLEOTIDE SEQUENCE [LARGE SCALE GENOMIC DNA]</scope>
    <source>
        <strain>129Pt</strain>
    </source>
</reference>
<protein>
    <recommendedName>
        <fullName evidence="1">Ribonuclease P protein component</fullName>
        <shortName evidence="1">RNase P protein</shortName>
        <shortName evidence="1">RNaseP protein</shortName>
        <ecNumber evidence="1">3.1.26.5</ecNumber>
    </recommendedName>
    <alternativeName>
        <fullName evidence="1">Protein C5</fullName>
    </alternativeName>
</protein>
<feature type="chain" id="PRO_1000021412" description="Ribonuclease P protein component">
    <location>
        <begin position="1"/>
        <end position="119"/>
    </location>
</feature>
<evidence type="ECO:0000255" key="1">
    <source>
        <dbReference type="HAMAP-Rule" id="MF_00227"/>
    </source>
</evidence>
<organism>
    <name type="scientific">Histophilus somni (strain 129Pt)</name>
    <name type="common">Haemophilus somnus</name>
    <dbReference type="NCBI Taxonomy" id="205914"/>
    <lineage>
        <taxon>Bacteria</taxon>
        <taxon>Pseudomonadati</taxon>
        <taxon>Pseudomonadota</taxon>
        <taxon>Gammaproteobacteria</taxon>
        <taxon>Pasteurellales</taxon>
        <taxon>Pasteurellaceae</taxon>
        <taxon>Histophilus</taxon>
    </lineage>
</organism>
<proteinExistence type="inferred from homology"/>
<keyword id="KW-0255">Endonuclease</keyword>
<keyword id="KW-0378">Hydrolase</keyword>
<keyword id="KW-0540">Nuclease</keyword>
<keyword id="KW-0694">RNA-binding</keyword>
<keyword id="KW-0819">tRNA processing</keyword>
<comment type="function">
    <text evidence="1">RNaseP catalyzes the removal of the 5'-leader sequence from pre-tRNA to produce the mature 5'-terminus. It can also cleave other RNA substrates such as 4.5S RNA. The protein component plays an auxiliary but essential role in vivo by binding to the 5'-leader sequence and broadening the substrate specificity of the ribozyme.</text>
</comment>
<comment type="catalytic activity">
    <reaction evidence="1">
        <text>Endonucleolytic cleavage of RNA, removing 5'-extranucleotides from tRNA precursor.</text>
        <dbReference type="EC" id="3.1.26.5"/>
    </reaction>
</comment>
<comment type="subunit">
    <text evidence="1">Consists of a catalytic RNA component (M1 or rnpB) and a protein subunit.</text>
</comment>
<comment type="similarity">
    <text evidence="1">Belongs to the RnpA family.</text>
</comment>
<sequence length="119" mass="14026">MVKLGFSRELRLLTPSHFKCVFQKPLRVSTPEITILARKNNLEHSRLGLTVAKKHLKRAHDRNRVKRISRESFRLLQGQLANYDFVIITKKGIGNLDNQQLFQTLDKLWKRHIRLVQKS</sequence>
<name>RNPA_HISS1</name>